<reference key="1">
    <citation type="journal article" date="2005" name="Genome Res.">
        <title>Coping with cold: the genome of the versatile marine Antarctica bacterium Pseudoalteromonas haloplanktis TAC125.</title>
        <authorList>
            <person name="Medigue C."/>
            <person name="Krin E."/>
            <person name="Pascal G."/>
            <person name="Barbe V."/>
            <person name="Bernsel A."/>
            <person name="Bertin P.N."/>
            <person name="Cheung F."/>
            <person name="Cruveiller S."/>
            <person name="D'Amico S."/>
            <person name="Duilio A."/>
            <person name="Fang G."/>
            <person name="Feller G."/>
            <person name="Ho C."/>
            <person name="Mangenot S."/>
            <person name="Marino G."/>
            <person name="Nilsson J."/>
            <person name="Parrilli E."/>
            <person name="Rocha E.P.C."/>
            <person name="Rouy Z."/>
            <person name="Sekowska A."/>
            <person name="Tutino M.L."/>
            <person name="Vallenet D."/>
            <person name="von Heijne G."/>
            <person name="Danchin A."/>
        </authorList>
    </citation>
    <scope>NUCLEOTIDE SEQUENCE [LARGE SCALE GENOMIC DNA]</scope>
    <source>
        <strain>TAC 125</strain>
    </source>
</reference>
<protein>
    <recommendedName>
        <fullName evidence="1">Lipid-A-disaccharide synthase</fullName>
        <ecNumber evidence="1">2.4.1.182</ecNumber>
    </recommendedName>
</protein>
<gene>
    <name evidence="1" type="primary">lpxB</name>
    <name type="ordered locus">PSHAa2017</name>
</gene>
<feature type="chain" id="PRO_0000255206" description="Lipid-A-disaccharide synthase">
    <location>
        <begin position="1"/>
        <end position="385"/>
    </location>
</feature>
<accession>Q3IIW8</accession>
<dbReference type="EC" id="2.4.1.182" evidence="1"/>
<dbReference type="EMBL" id="CR954246">
    <property type="protein sequence ID" value="CAI87073.1"/>
    <property type="molecule type" value="Genomic_DNA"/>
</dbReference>
<dbReference type="SMR" id="Q3IIW8"/>
<dbReference type="STRING" id="326442.PSHAa2017"/>
<dbReference type="CAZy" id="GT19">
    <property type="family name" value="Glycosyltransferase Family 19"/>
</dbReference>
<dbReference type="KEGG" id="pha:PSHAa2017"/>
<dbReference type="PATRIC" id="fig|326442.8.peg.1944"/>
<dbReference type="eggNOG" id="COG0763">
    <property type="taxonomic scope" value="Bacteria"/>
</dbReference>
<dbReference type="HOGENOM" id="CLU_036577_3_0_6"/>
<dbReference type="BioCyc" id="PHAL326442:PSHA_RS09965-MONOMER"/>
<dbReference type="UniPathway" id="UPA00973"/>
<dbReference type="Proteomes" id="UP000006843">
    <property type="component" value="Chromosome I"/>
</dbReference>
<dbReference type="GO" id="GO:0016020">
    <property type="term" value="C:membrane"/>
    <property type="evidence" value="ECO:0007669"/>
    <property type="project" value="GOC"/>
</dbReference>
<dbReference type="GO" id="GO:0008915">
    <property type="term" value="F:lipid-A-disaccharide synthase activity"/>
    <property type="evidence" value="ECO:0007669"/>
    <property type="project" value="UniProtKB-UniRule"/>
</dbReference>
<dbReference type="GO" id="GO:0005543">
    <property type="term" value="F:phospholipid binding"/>
    <property type="evidence" value="ECO:0007669"/>
    <property type="project" value="TreeGrafter"/>
</dbReference>
<dbReference type="GO" id="GO:0009245">
    <property type="term" value="P:lipid A biosynthetic process"/>
    <property type="evidence" value="ECO:0007669"/>
    <property type="project" value="UniProtKB-UniRule"/>
</dbReference>
<dbReference type="HAMAP" id="MF_00392">
    <property type="entry name" value="LpxB"/>
    <property type="match status" value="1"/>
</dbReference>
<dbReference type="InterPro" id="IPR003835">
    <property type="entry name" value="Glyco_trans_19"/>
</dbReference>
<dbReference type="NCBIfam" id="TIGR00215">
    <property type="entry name" value="lpxB"/>
    <property type="match status" value="1"/>
</dbReference>
<dbReference type="PANTHER" id="PTHR30372">
    <property type="entry name" value="LIPID-A-DISACCHARIDE SYNTHASE"/>
    <property type="match status" value="1"/>
</dbReference>
<dbReference type="PANTHER" id="PTHR30372:SF4">
    <property type="entry name" value="LIPID-A-DISACCHARIDE SYNTHASE, MITOCHONDRIAL-RELATED"/>
    <property type="match status" value="1"/>
</dbReference>
<dbReference type="Pfam" id="PF02684">
    <property type="entry name" value="LpxB"/>
    <property type="match status" value="1"/>
</dbReference>
<dbReference type="SUPFAM" id="SSF53756">
    <property type="entry name" value="UDP-Glycosyltransferase/glycogen phosphorylase"/>
    <property type="match status" value="1"/>
</dbReference>
<evidence type="ECO:0000255" key="1">
    <source>
        <dbReference type="HAMAP-Rule" id="MF_00392"/>
    </source>
</evidence>
<comment type="function">
    <text evidence="1">Condensation of UDP-2,3-diacylglucosamine and 2,3-diacylglucosamine-1-phosphate to form lipid A disaccharide, a precursor of lipid A, a phosphorylated glycolipid that anchors the lipopolysaccharide to the outer membrane of the cell.</text>
</comment>
<comment type="catalytic activity">
    <reaction evidence="1">
        <text>a lipid X + a UDP-2-N,3-O-bis[(3R)-3-hydroxyacyl]-alpha-D-glucosamine = a lipid A disaccharide + UDP + H(+)</text>
        <dbReference type="Rhea" id="RHEA:67828"/>
        <dbReference type="ChEBI" id="CHEBI:15378"/>
        <dbReference type="ChEBI" id="CHEBI:58223"/>
        <dbReference type="ChEBI" id="CHEBI:137748"/>
        <dbReference type="ChEBI" id="CHEBI:176338"/>
        <dbReference type="ChEBI" id="CHEBI:176343"/>
        <dbReference type="EC" id="2.4.1.182"/>
    </reaction>
</comment>
<comment type="pathway">
    <text evidence="1">Bacterial outer membrane biogenesis; LPS lipid A biosynthesis.</text>
</comment>
<comment type="similarity">
    <text evidence="1">Belongs to the LpxB family.</text>
</comment>
<keyword id="KW-0328">Glycosyltransferase</keyword>
<keyword id="KW-0441">Lipid A biosynthesis</keyword>
<keyword id="KW-0444">Lipid biosynthesis</keyword>
<keyword id="KW-0443">Lipid metabolism</keyword>
<keyword id="KW-1185">Reference proteome</keyword>
<keyword id="KW-0808">Transferase</keyword>
<organism>
    <name type="scientific">Pseudoalteromonas translucida (strain TAC 125)</name>
    <dbReference type="NCBI Taxonomy" id="326442"/>
    <lineage>
        <taxon>Bacteria</taxon>
        <taxon>Pseudomonadati</taxon>
        <taxon>Pseudomonadota</taxon>
        <taxon>Gammaproteobacteria</taxon>
        <taxon>Alteromonadales</taxon>
        <taxon>Pseudoalteromonadaceae</taxon>
        <taxon>Pseudoalteromonas</taxon>
    </lineage>
</organism>
<sequence length="385" mass="42491">MNKDQKQLRIGIVAGELSGDILGEGLIKALKKHFPDAIFEGIAGPKMQAQGCNTLYDMDELSVMGLVEVLGRLPRLLKIRKQLVQHFIDNPPDVFIGIDAPDFNLRVEKPLKDAGIKTVQYVSPSVWAWREKRIHTISAATNLVLALLPFEKEFYDKHQVPCTFVGHTLADDIALEHDDSKARKELGLSPDDKVLALLPGSRGSEVGLLSETYIKTAVQLQAQNPALKIVVPLVNAKRKAQFTEILNATAPTLKISLLDGQSKQAMQAADAILLASGTATLEGMLYKKPMVVGYKIKPLSYWIFKTLFTFNIKYFSLPNLLADEELVPEFLQSECNVANLTQALTPMLNTDNQALKARFLAIHKKIRLNASEQAANAVAELINAN</sequence>
<name>LPXB_PSET1</name>
<proteinExistence type="inferred from homology"/>